<evidence type="ECO:0000255" key="1">
    <source>
        <dbReference type="HAMAP-Rule" id="MF_01400"/>
    </source>
</evidence>
<evidence type="ECO:0000255" key="2">
    <source>
        <dbReference type="PROSITE-ProRule" id="PRU01126"/>
    </source>
</evidence>
<dbReference type="EC" id="1.8.4.12" evidence="1"/>
<dbReference type="EMBL" id="CP000958">
    <property type="protein sequence ID" value="ACA91093.1"/>
    <property type="molecule type" value="Genomic_DNA"/>
</dbReference>
<dbReference type="RefSeq" id="WP_006478590.1">
    <property type="nucleotide sequence ID" value="NC_010508.1"/>
</dbReference>
<dbReference type="SMR" id="B1JTT6"/>
<dbReference type="GeneID" id="83048705"/>
<dbReference type="KEGG" id="bcm:Bcenmc03_1932"/>
<dbReference type="HOGENOM" id="CLU_031040_8_5_4"/>
<dbReference type="Proteomes" id="UP000002169">
    <property type="component" value="Chromosome 1"/>
</dbReference>
<dbReference type="GO" id="GO:0005737">
    <property type="term" value="C:cytoplasm"/>
    <property type="evidence" value="ECO:0007669"/>
    <property type="project" value="TreeGrafter"/>
</dbReference>
<dbReference type="GO" id="GO:0033743">
    <property type="term" value="F:peptide-methionine (R)-S-oxide reductase activity"/>
    <property type="evidence" value="ECO:0007669"/>
    <property type="project" value="UniProtKB-UniRule"/>
</dbReference>
<dbReference type="GO" id="GO:0008270">
    <property type="term" value="F:zinc ion binding"/>
    <property type="evidence" value="ECO:0007669"/>
    <property type="project" value="UniProtKB-UniRule"/>
</dbReference>
<dbReference type="GO" id="GO:0030091">
    <property type="term" value="P:protein repair"/>
    <property type="evidence" value="ECO:0007669"/>
    <property type="project" value="InterPro"/>
</dbReference>
<dbReference type="GO" id="GO:0006979">
    <property type="term" value="P:response to oxidative stress"/>
    <property type="evidence" value="ECO:0007669"/>
    <property type="project" value="InterPro"/>
</dbReference>
<dbReference type="FunFam" id="2.170.150.20:FF:000003">
    <property type="entry name" value="Peptide methionine sulfoxide reductase MsrB"/>
    <property type="match status" value="1"/>
</dbReference>
<dbReference type="Gene3D" id="2.170.150.20">
    <property type="entry name" value="Peptide methionine sulfoxide reductase"/>
    <property type="match status" value="1"/>
</dbReference>
<dbReference type="HAMAP" id="MF_01400">
    <property type="entry name" value="MsrB"/>
    <property type="match status" value="1"/>
</dbReference>
<dbReference type="InterPro" id="IPR028427">
    <property type="entry name" value="Met_Sox_Rdtase_MsrB"/>
</dbReference>
<dbReference type="InterPro" id="IPR002579">
    <property type="entry name" value="Met_Sox_Rdtase_MsrB_dom"/>
</dbReference>
<dbReference type="InterPro" id="IPR011057">
    <property type="entry name" value="Mss4-like_sf"/>
</dbReference>
<dbReference type="NCBIfam" id="TIGR00357">
    <property type="entry name" value="peptide-methionine (R)-S-oxide reductase MsrB"/>
    <property type="match status" value="1"/>
</dbReference>
<dbReference type="PANTHER" id="PTHR10173">
    <property type="entry name" value="METHIONINE SULFOXIDE REDUCTASE"/>
    <property type="match status" value="1"/>
</dbReference>
<dbReference type="PANTHER" id="PTHR10173:SF52">
    <property type="entry name" value="METHIONINE-R-SULFOXIDE REDUCTASE B1"/>
    <property type="match status" value="1"/>
</dbReference>
<dbReference type="Pfam" id="PF01641">
    <property type="entry name" value="SelR"/>
    <property type="match status" value="1"/>
</dbReference>
<dbReference type="SUPFAM" id="SSF51316">
    <property type="entry name" value="Mss4-like"/>
    <property type="match status" value="1"/>
</dbReference>
<dbReference type="PROSITE" id="PS51790">
    <property type="entry name" value="MSRB"/>
    <property type="match status" value="1"/>
</dbReference>
<proteinExistence type="inferred from homology"/>
<name>MSRB_BURO0</name>
<reference key="1">
    <citation type="submission" date="2008-02" db="EMBL/GenBank/DDBJ databases">
        <title>Complete sequence of chromosome 1 of Burkholderia cenocepacia MC0-3.</title>
        <authorList>
            <person name="Copeland A."/>
            <person name="Lucas S."/>
            <person name="Lapidus A."/>
            <person name="Barry K."/>
            <person name="Bruce D."/>
            <person name="Goodwin L."/>
            <person name="Glavina del Rio T."/>
            <person name="Dalin E."/>
            <person name="Tice H."/>
            <person name="Pitluck S."/>
            <person name="Chain P."/>
            <person name="Malfatti S."/>
            <person name="Shin M."/>
            <person name="Vergez L."/>
            <person name="Schmutz J."/>
            <person name="Larimer F."/>
            <person name="Land M."/>
            <person name="Hauser L."/>
            <person name="Kyrpides N."/>
            <person name="Mikhailova N."/>
            <person name="Tiedje J."/>
            <person name="Richardson P."/>
        </authorList>
    </citation>
    <scope>NUCLEOTIDE SEQUENCE [LARGE SCALE GENOMIC DNA]</scope>
    <source>
        <strain>MC0-3</strain>
    </source>
</reference>
<organism>
    <name type="scientific">Burkholderia orbicola (strain MC0-3)</name>
    <dbReference type="NCBI Taxonomy" id="406425"/>
    <lineage>
        <taxon>Bacteria</taxon>
        <taxon>Pseudomonadati</taxon>
        <taxon>Pseudomonadota</taxon>
        <taxon>Betaproteobacteria</taxon>
        <taxon>Burkholderiales</taxon>
        <taxon>Burkholderiaceae</taxon>
        <taxon>Burkholderia</taxon>
        <taxon>Burkholderia cepacia complex</taxon>
        <taxon>Burkholderia orbicola</taxon>
    </lineage>
</organism>
<accession>B1JTT6</accession>
<protein>
    <recommendedName>
        <fullName evidence="1">Peptide methionine sulfoxide reductase MsrB</fullName>
        <ecNumber evidence="1">1.8.4.12</ecNumber>
    </recommendedName>
    <alternativeName>
        <fullName evidence="1">Peptide-methionine (R)-S-oxide reductase</fullName>
    </alternativeName>
</protein>
<sequence>MSHDSDDKTFPYQKDDAELRRRLTPMQYEVTQHAATERAFTGEYTDTEDAGIYKCVVCSTPLFESGAKFHSGCGWPSYFKPLNGEVIDEKVDYSHGMVRVEVRCNHCGAHLGHVFEDGPRDKTGLRYCINSAALNFESRPENE</sequence>
<comment type="catalytic activity">
    <reaction evidence="1">
        <text>L-methionyl-[protein] + [thioredoxin]-disulfide + H2O = L-methionyl-(R)-S-oxide-[protein] + [thioredoxin]-dithiol</text>
        <dbReference type="Rhea" id="RHEA:24164"/>
        <dbReference type="Rhea" id="RHEA-COMP:10698"/>
        <dbReference type="Rhea" id="RHEA-COMP:10700"/>
        <dbReference type="Rhea" id="RHEA-COMP:12313"/>
        <dbReference type="Rhea" id="RHEA-COMP:12314"/>
        <dbReference type="ChEBI" id="CHEBI:15377"/>
        <dbReference type="ChEBI" id="CHEBI:16044"/>
        <dbReference type="ChEBI" id="CHEBI:29950"/>
        <dbReference type="ChEBI" id="CHEBI:45764"/>
        <dbReference type="ChEBI" id="CHEBI:50058"/>
        <dbReference type="EC" id="1.8.4.12"/>
    </reaction>
</comment>
<comment type="cofactor">
    <cofactor evidence="1">
        <name>Zn(2+)</name>
        <dbReference type="ChEBI" id="CHEBI:29105"/>
    </cofactor>
    <text evidence="1">Binds 1 zinc ion per subunit. The zinc ion is important for the structural integrity of the protein.</text>
</comment>
<comment type="similarity">
    <text evidence="1">Belongs to the MsrB Met sulfoxide reductase family.</text>
</comment>
<feature type="chain" id="PRO_1000145352" description="Peptide methionine sulfoxide reductase MsrB">
    <location>
        <begin position="1"/>
        <end position="143"/>
    </location>
</feature>
<feature type="domain" description="MsrB" evidence="2">
    <location>
        <begin position="16"/>
        <end position="139"/>
    </location>
</feature>
<feature type="active site" description="Nucleophile" evidence="2">
    <location>
        <position position="128"/>
    </location>
</feature>
<feature type="binding site" evidence="2">
    <location>
        <position position="55"/>
    </location>
    <ligand>
        <name>Zn(2+)</name>
        <dbReference type="ChEBI" id="CHEBI:29105"/>
    </ligand>
</feature>
<feature type="binding site" evidence="2">
    <location>
        <position position="58"/>
    </location>
    <ligand>
        <name>Zn(2+)</name>
        <dbReference type="ChEBI" id="CHEBI:29105"/>
    </ligand>
</feature>
<feature type="binding site" evidence="2">
    <location>
        <position position="104"/>
    </location>
    <ligand>
        <name>Zn(2+)</name>
        <dbReference type="ChEBI" id="CHEBI:29105"/>
    </ligand>
</feature>
<feature type="binding site" evidence="2">
    <location>
        <position position="107"/>
    </location>
    <ligand>
        <name>Zn(2+)</name>
        <dbReference type="ChEBI" id="CHEBI:29105"/>
    </ligand>
</feature>
<keyword id="KW-0479">Metal-binding</keyword>
<keyword id="KW-0560">Oxidoreductase</keyword>
<keyword id="KW-0862">Zinc</keyword>
<gene>
    <name evidence="1" type="primary">msrB</name>
    <name type="ordered locus">Bcenmc03_1932</name>
</gene>